<gene>
    <name evidence="1" type="primary">rnpA</name>
    <name type="ordered locus">Cphy_3945</name>
</gene>
<dbReference type="EC" id="3.1.26.5" evidence="1"/>
<dbReference type="EMBL" id="CP000885">
    <property type="protein sequence ID" value="ABX44292.1"/>
    <property type="molecule type" value="Genomic_DNA"/>
</dbReference>
<dbReference type="RefSeq" id="WP_012201939.1">
    <property type="nucleotide sequence ID" value="NC_010001.1"/>
</dbReference>
<dbReference type="SMR" id="A9KLY3"/>
<dbReference type="STRING" id="357809.Cphy_3945"/>
<dbReference type="KEGG" id="cpy:Cphy_3945"/>
<dbReference type="eggNOG" id="COG0594">
    <property type="taxonomic scope" value="Bacteria"/>
</dbReference>
<dbReference type="HOGENOM" id="CLU_117179_9_3_9"/>
<dbReference type="OrthoDB" id="9810867at2"/>
<dbReference type="Proteomes" id="UP000000370">
    <property type="component" value="Chromosome"/>
</dbReference>
<dbReference type="GO" id="GO:0030677">
    <property type="term" value="C:ribonuclease P complex"/>
    <property type="evidence" value="ECO:0007669"/>
    <property type="project" value="TreeGrafter"/>
</dbReference>
<dbReference type="GO" id="GO:0042781">
    <property type="term" value="F:3'-tRNA processing endoribonuclease activity"/>
    <property type="evidence" value="ECO:0007669"/>
    <property type="project" value="TreeGrafter"/>
</dbReference>
<dbReference type="GO" id="GO:0004526">
    <property type="term" value="F:ribonuclease P activity"/>
    <property type="evidence" value="ECO:0007669"/>
    <property type="project" value="UniProtKB-UniRule"/>
</dbReference>
<dbReference type="GO" id="GO:0000049">
    <property type="term" value="F:tRNA binding"/>
    <property type="evidence" value="ECO:0007669"/>
    <property type="project" value="UniProtKB-UniRule"/>
</dbReference>
<dbReference type="GO" id="GO:0001682">
    <property type="term" value="P:tRNA 5'-leader removal"/>
    <property type="evidence" value="ECO:0007669"/>
    <property type="project" value="UniProtKB-UniRule"/>
</dbReference>
<dbReference type="Gene3D" id="3.30.230.10">
    <property type="match status" value="1"/>
</dbReference>
<dbReference type="HAMAP" id="MF_00227">
    <property type="entry name" value="RNase_P"/>
    <property type="match status" value="1"/>
</dbReference>
<dbReference type="InterPro" id="IPR020568">
    <property type="entry name" value="Ribosomal_Su5_D2-typ_SF"/>
</dbReference>
<dbReference type="InterPro" id="IPR014721">
    <property type="entry name" value="Ribsml_uS5_D2-typ_fold_subgr"/>
</dbReference>
<dbReference type="InterPro" id="IPR000100">
    <property type="entry name" value="RNase_P"/>
</dbReference>
<dbReference type="NCBIfam" id="TIGR00188">
    <property type="entry name" value="rnpA"/>
    <property type="match status" value="1"/>
</dbReference>
<dbReference type="PANTHER" id="PTHR33992">
    <property type="entry name" value="RIBONUCLEASE P PROTEIN COMPONENT"/>
    <property type="match status" value="1"/>
</dbReference>
<dbReference type="PANTHER" id="PTHR33992:SF1">
    <property type="entry name" value="RIBONUCLEASE P PROTEIN COMPONENT"/>
    <property type="match status" value="1"/>
</dbReference>
<dbReference type="Pfam" id="PF00825">
    <property type="entry name" value="Ribonuclease_P"/>
    <property type="match status" value="1"/>
</dbReference>
<dbReference type="SUPFAM" id="SSF54211">
    <property type="entry name" value="Ribosomal protein S5 domain 2-like"/>
    <property type="match status" value="1"/>
</dbReference>
<reference key="1">
    <citation type="submission" date="2007-11" db="EMBL/GenBank/DDBJ databases">
        <title>Complete genome sequence of Clostridium phytofermentans ISDg.</title>
        <authorList>
            <person name="Leschine S.B."/>
            <person name="Warnick T.A."/>
            <person name="Blanchard J.L."/>
            <person name="Schnell D.J."/>
            <person name="Petit E.L."/>
            <person name="LaTouf W.G."/>
            <person name="Copeland A."/>
            <person name="Lucas S."/>
            <person name="Lapidus A."/>
            <person name="Barry K."/>
            <person name="Glavina del Rio T."/>
            <person name="Dalin E."/>
            <person name="Tice H."/>
            <person name="Pitluck S."/>
            <person name="Kiss H."/>
            <person name="Brettin T."/>
            <person name="Bruce D."/>
            <person name="Detter J.C."/>
            <person name="Han C."/>
            <person name="Kuske C."/>
            <person name="Schmutz J."/>
            <person name="Larimer F."/>
            <person name="Land M."/>
            <person name="Hauser L."/>
            <person name="Kyrpides N."/>
            <person name="Kim E.A."/>
            <person name="Richardson P."/>
        </authorList>
    </citation>
    <scope>NUCLEOTIDE SEQUENCE [LARGE SCALE GENOMIC DNA]</scope>
    <source>
        <strain>ATCC 700394 / DSM 18823 / ISDg</strain>
    </source>
</reference>
<keyword id="KW-0255">Endonuclease</keyword>
<keyword id="KW-0378">Hydrolase</keyword>
<keyword id="KW-0540">Nuclease</keyword>
<keyword id="KW-1185">Reference proteome</keyword>
<keyword id="KW-0694">RNA-binding</keyword>
<keyword id="KW-0819">tRNA processing</keyword>
<organism>
    <name type="scientific">Lachnoclostridium phytofermentans (strain ATCC 700394 / DSM 18823 / ISDg)</name>
    <name type="common">Clostridium phytofermentans</name>
    <dbReference type="NCBI Taxonomy" id="357809"/>
    <lineage>
        <taxon>Bacteria</taxon>
        <taxon>Bacillati</taxon>
        <taxon>Bacillota</taxon>
        <taxon>Clostridia</taxon>
        <taxon>Lachnospirales</taxon>
        <taxon>Lachnospiraceae</taxon>
    </lineage>
</organism>
<proteinExistence type="inferred from homology"/>
<comment type="function">
    <text evidence="1">RNaseP catalyzes the removal of the 5'-leader sequence from pre-tRNA to produce the mature 5'-terminus. It can also cleave other RNA substrates such as 4.5S RNA. The protein component plays an auxiliary but essential role in vivo by binding to the 5'-leader sequence and broadening the substrate specificity of the ribozyme.</text>
</comment>
<comment type="catalytic activity">
    <reaction evidence="1">
        <text>Endonucleolytic cleavage of RNA, removing 5'-extranucleotides from tRNA precursor.</text>
        <dbReference type="EC" id="3.1.26.5"/>
    </reaction>
</comment>
<comment type="subunit">
    <text evidence="1">Consists of a catalytic RNA component (M1 or rnpB) and a protein subunit.</text>
</comment>
<comment type="similarity">
    <text evidence="1">Belongs to the RnpA family.</text>
</comment>
<accession>A9KLY3</accession>
<protein>
    <recommendedName>
        <fullName evidence="1">Ribonuclease P protein component</fullName>
        <shortName evidence="1">RNase P protein</shortName>
        <shortName evidence="1">RNaseP protein</shortName>
        <ecNumber evidence="1">3.1.26.5</ecNumber>
    </recommendedName>
    <alternativeName>
        <fullName evidence="1">Protein C5</fullName>
    </alternativeName>
</protein>
<feature type="chain" id="PRO_1000078194" description="Ribonuclease P protein component">
    <location>
        <begin position="1"/>
        <end position="116"/>
    </location>
</feature>
<sequence>MSESLKNSQQFGNVYKNGKSFANKYLVMYVCKNELSINRLGISVSKKVGNSVVRHRISRLIRESYRLNDSISNSGLDIVIVARAGSKGKNYSEISSALMHLAKLHKIISSSEPDRN</sequence>
<name>RNPA_LACP7</name>
<evidence type="ECO:0000255" key="1">
    <source>
        <dbReference type="HAMAP-Rule" id="MF_00227"/>
    </source>
</evidence>